<protein>
    <recommendedName>
        <fullName>Tigerinin-3</fullName>
    </recommendedName>
</protein>
<comment type="function">
    <text evidence="1">Antibacterial activity against B.subtilis, E.coli, S.aureus, M.luteus and P.putida. Antifungal activity against S.cerevisiae.</text>
</comment>
<comment type="subcellular location">
    <subcellularLocation>
        <location>Secreted</location>
    </subcellularLocation>
</comment>
<comment type="tissue specificity">
    <text>Expressed by the skin glands.</text>
</comment>
<comment type="mass spectrometry"/>
<evidence type="ECO:0000269" key="1">
    <source>
    </source>
</evidence>
<accession>P82653</accession>
<organism>
    <name type="scientific">Hoplobatrachus tigerinus</name>
    <name type="common">Indian bull frog</name>
    <name type="synonym">Rana tigerina</name>
    <dbReference type="NCBI Taxonomy" id="103373"/>
    <lineage>
        <taxon>Eukaryota</taxon>
        <taxon>Metazoa</taxon>
        <taxon>Chordata</taxon>
        <taxon>Craniata</taxon>
        <taxon>Vertebrata</taxon>
        <taxon>Euteleostomi</taxon>
        <taxon>Amphibia</taxon>
        <taxon>Batrachia</taxon>
        <taxon>Anura</taxon>
        <taxon>Neobatrachia</taxon>
        <taxon>Ranoidea</taxon>
        <taxon>Dicroglossidae</taxon>
        <taxon>Dicroglossinae</taxon>
        <taxon>Hoplobatrachus</taxon>
    </lineage>
</organism>
<dbReference type="GO" id="GO:0005576">
    <property type="term" value="C:extracellular region"/>
    <property type="evidence" value="ECO:0007669"/>
    <property type="project" value="UniProtKB-SubCell"/>
</dbReference>
<dbReference type="GO" id="GO:0042742">
    <property type="term" value="P:defense response to bacterium"/>
    <property type="evidence" value="ECO:0007669"/>
    <property type="project" value="UniProtKB-KW"/>
</dbReference>
<dbReference type="GO" id="GO:0050832">
    <property type="term" value="P:defense response to fungus"/>
    <property type="evidence" value="ECO:0007669"/>
    <property type="project" value="UniProtKB-KW"/>
</dbReference>
<dbReference type="GO" id="GO:0031640">
    <property type="term" value="P:killing of cells of another organism"/>
    <property type="evidence" value="ECO:0007669"/>
    <property type="project" value="UniProtKB-KW"/>
</dbReference>
<reference key="1">
    <citation type="journal article" date="2001" name="J. Biol. Chem.">
        <title>Tigerinins: novel antimicrobial peptides from the Indian frog Rana tigerina.</title>
        <authorList>
            <person name="Purna Sai K."/>
            <person name="Jaganadham M.V."/>
            <person name="Vairamani M."/>
            <person name="Raju N.P."/>
            <person name="Devi A.S."/>
            <person name="Nagaraj R."/>
            <person name="Sitaram N."/>
        </authorList>
    </citation>
    <scope>PROTEIN SEQUENCE</scope>
    <scope>FUNCTION</scope>
    <scope>AMIDATION AT TYR-12</scope>
    <scope>MASS SPECTROMETRY</scope>
    <scope>DISULFIDE BONDS</scope>
    <source>
        <tissue>Skin secretion</tissue>
    </source>
</reference>
<proteinExistence type="evidence at protein level"/>
<feature type="peptide" id="PRO_0000043840" description="Tigerinin-3">
    <location>
        <begin position="1"/>
        <end position="12"/>
    </location>
</feature>
<feature type="modified residue" description="Tyrosine amide" evidence="1">
    <location>
        <position position="12"/>
    </location>
</feature>
<feature type="disulfide bond" evidence="1">
    <location>
        <begin position="3"/>
        <end position="11"/>
    </location>
</feature>
<keyword id="KW-0027">Amidation</keyword>
<keyword id="KW-0878">Amphibian defense peptide</keyword>
<keyword id="KW-0044">Antibiotic</keyword>
<keyword id="KW-0929">Antimicrobial</keyword>
<keyword id="KW-0903">Direct protein sequencing</keyword>
<keyword id="KW-1015">Disulfide bond</keyword>
<keyword id="KW-0295">Fungicide</keyword>
<keyword id="KW-0964">Secreted</keyword>
<sequence>RVCYAIPLPICY</sequence>
<name>TIN3_HOPTI</name>